<accession>Q2NVW4</accession>
<organism>
    <name type="scientific">Sodalis glossinidius (strain morsitans)</name>
    <dbReference type="NCBI Taxonomy" id="343509"/>
    <lineage>
        <taxon>Bacteria</taxon>
        <taxon>Pseudomonadati</taxon>
        <taxon>Pseudomonadota</taxon>
        <taxon>Gammaproteobacteria</taxon>
        <taxon>Enterobacterales</taxon>
        <taxon>Bruguierivoracaceae</taxon>
        <taxon>Sodalis</taxon>
    </lineage>
</organism>
<proteinExistence type="inferred from homology"/>
<name>LEU3_SODGM</name>
<comment type="function">
    <text evidence="1">Catalyzes the oxidation of 3-carboxy-2-hydroxy-4-methylpentanoate (3-isopropylmalate) to 3-carboxy-4-methyl-2-oxopentanoate. The product decarboxylates to 4-methyl-2 oxopentanoate.</text>
</comment>
<comment type="catalytic activity">
    <reaction evidence="1">
        <text>(2R,3S)-3-isopropylmalate + NAD(+) = 4-methyl-2-oxopentanoate + CO2 + NADH</text>
        <dbReference type="Rhea" id="RHEA:32271"/>
        <dbReference type="ChEBI" id="CHEBI:16526"/>
        <dbReference type="ChEBI" id="CHEBI:17865"/>
        <dbReference type="ChEBI" id="CHEBI:35121"/>
        <dbReference type="ChEBI" id="CHEBI:57540"/>
        <dbReference type="ChEBI" id="CHEBI:57945"/>
        <dbReference type="EC" id="1.1.1.85"/>
    </reaction>
</comment>
<comment type="cofactor">
    <cofactor evidence="1">
        <name>Mg(2+)</name>
        <dbReference type="ChEBI" id="CHEBI:18420"/>
    </cofactor>
    <cofactor evidence="1">
        <name>Mn(2+)</name>
        <dbReference type="ChEBI" id="CHEBI:29035"/>
    </cofactor>
    <text evidence="1">Binds 1 Mg(2+) or Mn(2+) ion per subunit.</text>
</comment>
<comment type="pathway">
    <text evidence="1">Amino-acid biosynthesis; L-leucine biosynthesis; L-leucine from 3-methyl-2-oxobutanoate: step 3/4.</text>
</comment>
<comment type="subunit">
    <text evidence="1">Homodimer.</text>
</comment>
<comment type="subcellular location">
    <subcellularLocation>
        <location evidence="1">Cytoplasm</location>
    </subcellularLocation>
</comment>
<comment type="similarity">
    <text evidence="1">Belongs to the isocitrate and isopropylmalate dehydrogenases family. LeuB type 1 subfamily.</text>
</comment>
<reference key="1">
    <citation type="journal article" date="2006" name="Genome Res.">
        <title>Massive genome erosion and functional adaptations provide insights into the symbiotic lifestyle of Sodalis glossinidius in the tsetse host.</title>
        <authorList>
            <person name="Toh H."/>
            <person name="Weiss B.L."/>
            <person name="Perkin S.A.H."/>
            <person name="Yamashita A."/>
            <person name="Oshima K."/>
            <person name="Hattori M."/>
            <person name="Aksoy S."/>
        </authorList>
    </citation>
    <scope>NUCLEOTIDE SEQUENCE [LARGE SCALE GENOMIC DNA]</scope>
    <source>
        <strain>morsitans</strain>
    </source>
</reference>
<dbReference type="EC" id="1.1.1.85" evidence="1"/>
<dbReference type="EMBL" id="AP008232">
    <property type="protein sequence ID" value="BAE73711.1"/>
    <property type="molecule type" value="Genomic_DNA"/>
</dbReference>
<dbReference type="SMR" id="Q2NVW4"/>
<dbReference type="STRING" id="343509.SG0436"/>
<dbReference type="KEGG" id="sgl:SG0436"/>
<dbReference type="eggNOG" id="COG0473">
    <property type="taxonomic scope" value="Bacteria"/>
</dbReference>
<dbReference type="HOGENOM" id="CLU_031953_0_3_6"/>
<dbReference type="UniPathway" id="UPA00048">
    <property type="reaction ID" value="UER00072"/>
</dbReference>
<dbReference type="Proteomes" id="UP000001932">
    <property type="component" value="Chromosome"/>
</dbReference>
<dbReference type="GO" id="GO:0005829">
    <property type="term" value="C:cytosol"/>
    <property type="evidence" value="ECO:0007669"/>
    <property type="project" value="TreeGrafter"/>
</dbReference>
<dbReference type="GO" id="GO:0003862">
    <property type="term" value="F:3-isopropylmalate dehydrogenase activity"/>
    <property type="evidence" value="ECO:0007669"/>
    <property type="project" value="UniProtKB-UniRule"/>
</dbReference>
<dbReference type="GO" id="GO:0000287">
    <property type="term" value="F:magnesium ion binding"/>
    <property type="evidence" value="ECO:0007669"/>
    <property type="project" value="InterPro"/>
</dbReference>
<dbReference type="GO" id="GO:0051287">
    <property type="term" value="F:NAD binding"/>
    <property type="evidence" value="ECO:0007669"/>
    <property type="project" value="InterPro"/>
</dbReference>
<dbReference type="GO" id="GO:0009098">
    <property type="term" value="P:L-leucine biosynthetic process"/>
    <property type="evidence" value="ECO:0007669"/>
    <property type="project" value="UniProtKB-UniRule"/>
</dbReference>
<dbReference type="FunFam" id="3.40.718.10:FF:000004">
    <property type="entry name" value="3-isopropylmalate dehydrogenase"/>
    <property type="match status" value="1"/>
</dbReference>
<dbReference type="Gene3D" id="3.40.718.10">
    <property type="entry name" value="Isopropylmalate Dehydrogenase"/>
    <property type="match status" value="1"/>
</dbReference>
<dbReference type="HAMAP" id="MF_01033">
    <property type="entry name" value="LeuB_type1"/>
    <property type="match status" value="1"/>
</dbReference>
<dbReference type="InterPro" id="IPR019818">
    <property type="entry name" value="IsoCit/isopropylmalate_DH_CS"/>
</dbReference>
<dbReference type="InterPro" id="IPR024084">
    <property type="entry name" value="IsoPropMal-DH-like_dom"/>
</dbReference>
<dbReference type="InterPro" id="IPR004429">
    <property type="entry name" value="Isopropylmalate_DH"/>
</dbReference>
<dbReference type="NCBIfam" id="TIGR00169">
    <property type="entry name" value="leuB"/>
    <property type="match status" value="1"/>
</dbReference>
<dbReference type="PANTHER" id="PTHR42979">
    <property type="entry name" value="3-ISOPROPYLMALATE DEHYDROGENASE"/>
    <property type="match status" value="1"/>
</dbReference>
<dbReference type="PANTHER" id="PTHR42979:SF1">
    <property type="entry name" value="3-ISOPROPYLMALATE DEHYDROGENASE"/>
    <property type="match status" value="1"/>
</dbReference>
<dbReference type="Pfam" id="PF00180">
    <property type="entry name" value="Iso_dh"/>
    <property type="match status" value="1"/>
</dbReference>
<dbReference type="SMART" id="SM01329">
    <property type="entry name" value="Iso_dh"/>
    <property type="match status" value="1"/>
</dbReference>
<dbReference type="SUPFAM" id="SSF53659">
    <property type="entry name" value="Isocitrate/Isopropylmalate dehydrogenase-like"/>
    <property type="match status" value="1"/>
</dbReference>
<dbReference type="PROSITE" id="PS00470">
    <property type="entry name" value="IDH_IMDH"/>
    <property type="match status" value="1"/>
</dbReference>
<evidence type="ECO:0000255" key="1">
    <source>
        <dbReference type="HAMAP-Rule" id="MF_01033"/>
    </source>
</evidence>
<keyword id="KW-0028">Amino-acid biosynthesis</keyword>
<keyword id="KW-0100">Branched-chain amino acid biosynthesis</keyword>
<keyword id="KW-0963">Cytoplasm</keyword>
<keyword id="KW-0432">Leucine biosynthesis</keyword>
<keyword id="KW-0460">Magnesium</keyword>
<keyword id="KW-0464">Manganese</keyword>
<keyword id="KW-0479">Metal-binding</keyword>
<keyword id="KW-0520">NAD</keyword>
<keyword id="KW-0560">Oxidoreductase</keyword>
<protein>
    <recommendedName>
        <fullName evidence="1">3-isopropylmalate dehydrogenase</fullName>
        <ecNumber evidence="1">1.1.1.85</ecNumber>
    </recommendedName>
    <alternativeName>
        <fullName evidence="1">3-IPM-DH</fullName>
    </alternativeName>
    <alternativeName>
        <fullName evidence="1">Beta-IPM dehydrogenase</fullName>
        <shortName evidence="1">IMDH</shortName>
    </alternativeName>
</protein>
<gene>
    <name evidence="1" type="primary">leuB</name>
    <name type="ordered locus">SG0436</name>
</gene>
<feature type="chain" id="PRO_0000250138" description="3-isopropylmalate dehydrogenase">
    <location>
        <begin position="1"/>
        <end position="364"/>
    </location>
</feature>
<feature type="binding site" evidence="1">
    <location>
        <begin position="79"/>
        <end position="92"/>
    </location>
    <ligand>
        <name>NAD(+)</name>
        <dbReference type="ChEBI" id="CHEBI:57540"/>
    </ligand>
</feature>
<feature type="binding site" evidence="1">
    <location>
        <position position="100"/>
    </location>
    <ligand>
        <name>substrate</name>
    </ligand>
</feature>
<feature type="binding site" evidence="1">
    <location>
        <position position="110"/>
    </location>
    <ligand>
        <name>substrate</name>
    </ligand>
</feature>
<feature type="binding site" evidence="1">
    <location>
        <position position="139"/>
    </location>
    <ligand>
        <name>substrate</name>
    </ligand>
</feature>
<feature type="binding site" evidence="1">
    <location>
        <position position="228"/>
    </location>
    <ligand>
        <name>Mg(2+)</name>
        <dbReference type="ChEBI" id="CHEBI:18420"/>
    </ligand>
</feature>
<feature type="binding site" evidence="1">
    <location>
        <position position="228"/>
    </location>
    <ligand>
        <name>substrate</name>
    </ligand>
</feature>
<feature type="binding site" evidence="1">
    <location>
        <position position="252"/>
    </location>
    <ligand>
        <name>Mg(2+)</name>
        <dbReference type="ChEBI" id="CHEBI:18420"/>
    </ligand>
</feature>
<feature type="binding site" evidence="1">
    <location>
        <position position="256"/>
    </location>
    <ligand>
        <name>Mg(2+)</name>
        <dbReference type="ChEBI" id="CHEBI:18420"/>
    </ligand>
</feature>
<feature type="binding site" evidence="1">
    <location>
        <begin position="286"/>
        <end position="298"/>
    </location>
    <ligand>
        <name>NAD(+)</name>
        <dbReference type="ChEBI" id="CHEBI:57540"/>
    </ligand>
</feature>
<feature type="site" description="Important for catalysis" evidence="1">
    <location>
        <position position="146"/>
    </location>
</feature>
<feature type="site" description="Important for catalysis" evidence="1">
    <location>
        <position position="196"/>
    </location>
</feature>
<sequence>MMSKTYHIAVLPGDGIGPEVMAQAYKILDAVRQRFNVRISTSEYDVGGAAIDRQGSPLPAGTVAGCEQADAILFGSVGGPKWEHLPAAEQPERGALLPLRKHFKLFSNLRPSRLYPGLEAYCPLRANIAERGFDILCVRELTGGIYFGQPKGREGTGPHEHAFDTEVYYRFEIERIARIAFESARKRRGKVTSIDKANVLQSSILWRKVVSQVAPDYPDVALSHLYIDNATMQLIKDPSQFDVMLCSNLFGDILSDECAMITGSMGMLPSASLNEQGFGMYEPAGGSAPDIAGKDIANPVAQILSASLLLRYSLGLDDAADAIELAVNQALEAGHRTADLAGGGSAVGTGEMGDIIAALISQGA</sequence>